<dbReference type="EC" id="5.1.3.9" evidence="1"/>
<dbReference type="EMBL" id="BA000036">
    <property type="protein sequence ID" value="BAC00042.1"/>
    <property type="molecule type" value="Genomic_DNA"/>
</dbReference>
<dbReference type="EMBL" id="BX927155">
    <property type="protein sequence ID" value="CAF21310.1"/>
    <property type="molecule type" value="Genomic_DNA"/>
</dbReference>
<dbReference type="RefSeq" id="NP_601848.1">
    <property type="nucleotide sequence ID" value="NC_003450.3"/>
</dbReference>
<dbReference type="RefSeq" id="WP_011015278.1">
    <property type="nucleotide sequence ID" value="NC_006958.1"/>
</dbReference>
<dbReference type="SMR" id="Q8NMD0"/>
<dbReference type="STRING" id="196627.cg2933"/>
<dbReference type="KEGG" id="cgb:cg2933"/>
<dbReference type="KEGG" id="cgl:Cgl2648"/>
<dbReference type="PATRIC" id="fig|196627.13.peg.2585"/>
<dbReference type="eggNOG" id="COG3010">
    <property type="taxonomic scope" value="Bacteria"/>
</dbReference>
<dbReference type="HOGENOM" id="CLU_086300_1_0_11"/>
<dbReference type="OrthoDB" id="9781704at2"/>
<dbReference type="BioCyc" id="CORYNE:G18NG-12265-MONOMER"/>
<dbReference type="UniPathway" id="UPA00629">
    <property type="reaction ID" value="UER00682"/>
</dbReference>
<dbReference type="Proteomes" id="UP000000582">
    <property type="component" value="Chromosome"/>
</dbReference>
<dbReference type="Proteomes" id="UP000001009">
    <property type="component" value="Chromosome"/>
</dbReference>
<dbReference type="GO" id="GO:0005829">
    <property type="term" value="C:cytosol"/>
    <property type="evidence" value="ECO:0007669"/>
    <property type="project" value="TreeGrafter"/>
</dbReference>
<dbReference type="GO" id="GO:0047465">
    <property type="term" value="F:N-acylglucosamine-6-phosphate 2-epimerase activity"/>
    <property type="evidence" value="ECO:0007669"/>
    <property type="project" value="UniProtKB-EC"/>
</dbReference>
<dbReference type="GO" id="GO:0005975">
    <property type="term" value="P:carbohydrate metabolic process"/>
    <property type="evidence" value="ECO:0007669"/>
    <property type="project" value="UniProtKB-UniRule"/>
</dbReference>
<dbReference type="GO" id="GO:0006053">
    <property type="term" value="P:N-acetylmannosamine catabolic process"/>
    <property type="evidence" value="ECO:0007669"/>
    <property type="project" value="TreeGrafter"/>
</dbReference>
<dbReference type="GO" id="GO:0019262">
    <property type="term" value="P:N-acetylneuraminate catabolic process"/>
    <property type="evidence" value="ECO:0007669"/>
    <property type="project" value="UniProtKB-UniRule"/>
</dbReference>
<dbReference type="CDD" id="cd04729">
    <property type="entry name" value="NanE"/>
    <property type="match status" value="1"/>
</dbReference>
<dbReference type="Gene3D" id="3.20.20.70">
    <property type="entry name" value="Aldolase class I"/>
    <property type="match status" value="1"/>
</dbReference>
<dbReference type="HAMAP" id="MF_01235">
    <property type="entry name" value="ManNAc6P_epimer"/>
    <property type="match status" value="1"/>
</dbReference>
<dbReference type="InterPro" id="IPR013785">
    <property type="entry name" value="Aldolase_TIM"/>
</dbReference>
<dbReference type="InterPro" id="IPR007260">
    <property type="entry name" value="NanE"/>
</dbReference>
<dbReference type="InterPro" id="IPR011060">
    <property type="entry name" value="RibuloseP-bd_barrel"/>
</dbReference>
<dbReference type="NCBIfam" id="NF002231">
    <property type="entry name" value="PRK01130.1"/>
    <property type="match status" value="1"/>
</dbReference>
<dbReference type="PANTHER" id="PTHR36204">
    <property type="entry name" value="N-ACETYLMANNOSAMINE-6-PHOSPHATE 2-EPIMERASE-RELATED"/>
    <property type="match status" value="1"/>
</dbReference>
<dbReference type="PANTHER" id="PTHR36204:SF1">
    <property type="entry name" value="N-ACETYLMANNOSAMINE-6-PHOSPHATE 2-EPIMERASE-RELATED"/>
    <property type="match status" value="1"/>
</dbReference>
<dbReference type="Pfam" id="PF04131">
    <property type="entry name" value="NanE"/>
    <property type="match status" value="1"/>
</dbReference>
<dbReference type="SUPFAM" id="SSF51366">
    <property type="entry name" value="Ribulose-phoshate binding barrel"/>
    <property type="match status" value="1"/>
</dbReference>
<accession>Q8NMD0</accession>
<proteinExistence type="inferred from homology"/>
<sequence>MDLNTQRSKLYAQLQGQLIVSVQAPDGHAMRDTHTLTHVAAACVDGGAPAIRCGGYGGLEDIRSISNRVDVPVFGLTKEGSEGVYITPTRDSVRAVAESGATVVCADATFRPRPDGSTFAELVTVAHDSGILIMADCATPEEVLSAHKAGADFVSTTLAGYTEHREKTVGPDFDCLREARELVPDAFLIGEGRFSNPADVAHGRLIGANAIIVGTAITDPGFITGQFASLLH</sequence>
<name>NANE_CORGL</name>
<protein>
    <recommendedName>
        <fullName evidence="1">Putative N-acetylmannosamine-6-phosphate 2-epimerase</fullName>
        <ecNumber evidence="1">5.1.3.9</ecNumber>
    </recommendedName>
    <alternativeName>
        <fullName evidence="1">ManNAc-6-P epimerase</fullName>
    </alternativeName>
</protein>
<feature type="chain" id="PRO_0000179769" description="Putative N-acetylmannosamine-6-phosphate 2-epimerase">
    <location>
        <begin position="1"/>
        <end position="232"/>
    </location>
</feature>
<reference key="1">
    <citation type="journal article" date="2003" name="Appl. Microbiol. Biotechnol.">
        <title>The Corynebacterium glutamicum genome: features and impacts on biotechnological processes.</title>
        <authorList>
            <person name="Ikeda M."/>
            <person name="Nakagawa S."/>
        </authorList>
    </citation>
    <scope>NUCLEOTIDE SEQUENCE [LARGE SCALE GENOMIC DNA]</scope>
    <source>
        <strain>ATCC 13032 / DSM 20300 / JCM 1318 / BCRC 11384 / CCUG 27702 / LMG 3730 / NBRC 12168 / NCIMB 10025 / NRRL B-2784 / 534</strain>
    </source>
</reference>
<reference key="2">
    <citation type="journal article" date="2003" name="J. Biotechnol.">
        <title>The complete Corynebacterium glutamicum ATCC 13032 genome sequence and its impact on the production of L-aspartate-derived amino acids and vitamins.</title>
        <authorList>
            <person name="Kalinowski J."/>
            <person name="Bathe B."/>
            <person name="Bartels D."/>
            <person name="Bischoff N."/>
            <person name="Bott M."/>
            <person name="Burkovski A."/>
            <person name="Dusch N."/>
            <person name="Eggeling L."/>
            <person name="Eikmanns B.J."/>
            <person name="Gaigalat L."/>
            <person name="Goesmann A."/>
            <person name="Hartmann M."/>
            <person name="Huthmacher K."/>
            <person name="Kraemer R."/>
            <person name="Linke B."/>
            <person name="McHardy A.C."/>
            <person name="Meyer F."/>
            <person name="Moeckel B."/>
            <person name="Pfefferle W."/>
            <person name="Puehler A."/>
            <person name="Rey D.A."/>
            <person name="Rueckert C."/>
            <person name="Rupp O."/>
            <person name="Sahm H."/>
            <person name="Wendisch V.F."/>
            <person name="Wiegraebe I."/>
            <person name="Tauch A."/>
        </authorList>
    </citation>
    <scope>NUCLEOTIDE SEQUENCE [LARGE SCALE GENOMIC DNA]</scope>
    <source>
        <strain>ATCC 13032 / DSM 20300 / JCM 1318 / BCRC 11384 / CCUG 27702 / LMG 3730 / NBRC 12168 / NCIMB 10025 / NRRL B-2784 / 534</strain>
    </source>
</reference>
<organism>
    <name type="scientific">Corynebacterium glutamicum (strain ATCC 13032 / DSM 20300 / JCM 1318 / BCRC 11384 / CCUG 27702 / LMG 3730 / NBRC 12168 / NCIMB 10025 / NRRL B-2784 / 534)</name>
    <dbReference type="NCBI Taxonomy" id="196627"/>
    <lineage>
        <taxon>Bacteria</taxon>
        <taxon>Bacillati</taxon>
        <taxon>Actinomycetota</taxon>
        <taxon>Actinomycetes</taxon>
        <taxon>Mycobacteriales</taxon>
        <taxon>Corynebacteriaceae</taxon>
        <taxon>Corynebacterium</taxon>
    </lineage>
</organism>
<gene>
    <name evidence="1" type="primary">nanE</name>
    <name type="ordered locus">Cgl2648</name>
    <name type="ordered locus">cg2933</name>
</gene>
<keyword id="KW-0119">Carbohydrate metabolism</keyword>
<keyword id="KW-0413">Isomerase</keyword>
<keyword id="KW-1185">Reference proteome</keyword>
<evidence type="ECO:0000255" key="1">
    <source>
        <dbReference type="HAMAP-Rule" id="MF_01235"/>
    </source>
</evidence>
<comment type="function">
    <text evidence="1">Converts N-acetylmannosamine-6-phosphate (ManNAc-6-P) to N-acetylglucosamine-6-phosphate (GlcNAc-6-P).</text>
</comment>
<comment type="catalytic activity">
    <reaction evidence="1">
        <text>an N-acyl-D-glucosamine 6-phosphate = an N-acyl-D-mannosamine 6-phosphate</text>
        <dbReference type="Rhea" id="RHEA:23932"/>
        <dbReference type="ChEBI" id="CHEBI:57599"/>
        <dbReference type="ChEBI" id="CHEBI:57666"/>
        <dbReference type="EC" id="5.1.3.9"/>
    </reaction>
</comment>
<comment type="pathway">
    <text evidence="1">Amino-sugar metabolism; N-acetylneuraminate degradation; D-fructose 6-phosphate from N-acetylneuraminate: step 3/5.</text>
</comment>
<comment type="similarity">
    <text evidence="1">Belongs to the NanE family.</text>
</comment>